<organism>
    <name type="scientific">Thermosynechococcus vestitus (strain NIES-2133 / IAM M-273 / BP-1)</name>
    <dbReference type="NCBI Taxonomy" id="197221"/>
    <lineage>
        <taxon>Bacteria</taxon>
        <taxon>Bacillati</taxon>
        <taxon>Cyanobacteriota</taxon>
        <taxon>Cyanophyceae</taxon>
        <taxon>Acaryochloridales</taxon>
        <taxon>Thermosynechococcaceae</taxon>
        <taxon>Thermosynechococcus</taxon>
    </lineage>
</organism>
<accession>P0C8P1</accession>
<accession>Q9X9T0</accession>
<keyword id="KW-0963">Cytoplasm</keyword>
<keyword id="KW-0342">GTP-binding</keyword>
<keyword id="KW-0378">Hydrolase</keyword>
<keyword id="KW-0460">Magnesium</keyword>
<keyword id="KW-0479">Metal-binding</keyword>
<keyword id="KW-0547">Nucleotide-binding</keyword>
<keyword id="KW-0630">Potassium</keyword>
<keyword id="KW-1185">Reference proteome</keyword>
<keyword id="KW-0819">tRNA processing</keyword>
<sequence>MRHFHDTIAAIATAIVPQQGSIGIVRLSGAKAVAIAQSLFEAPGKQPWESHRILYGYVRDPQTKERVDEALLLLMLAPRSYTREDVVEFHCHGGLIPVQRVLQLCVAAGARLADPGEFTLRAFLNGRLDLTQAESVAELVAAQSTTAAQIALAGLTGKLARPLQQIRQTCLSLLAEIEARLDFTDELPPLDPAAIAEQIRQLQHQVEAFLATAERGALIRTGLKVAIVGRPNVGKSSLLNAWSRSDRAIVTDLPGTTRDIVESQLVVGGIPIQVLDTAGIRETDNLVEQIGVQRSRQAALSADLILLVIDASQGWTAADQAIYDQLQLKQRRQQAPQSVLVVLNKADLLSETTEVKDIPLPIAPIPTVLLSALSQRGIEQLEDAILHLVQGQGVSAANLDFAINQRQAGLLEQVHQSLNHVLAAIDAQLPLDFWTIDLHAAARALGTLTGEEVTESVLTEIFSRFCIGK</sequence>
<proteinExistence type="inferred from homology"/>
<evidence type="ECO:0000255" key="1">
    <source>
        <dbReference type="HAMAP-Rule" id="MF_00379"/>
    </source>
</evidence>
<dbReference type="EC" id="3.6.-.-" evidence="1"/>
<dbReference type="EMBL" id="BA000039">
    <property type="protein sequence ID" value="BAC08513.1"/>
    <property type="molecule type" value="Genomic_DNA"/>
</dbReference>
<dbReference type="RefSeq" id="NP_681751.1">
    <property type="nucleotide sequence ID" value="NC_004113.1"/>
</dbReference>
<dbReference type="RefSeq" id="WP_011056805.1">
    <property type="nucleotide sequence ID" value="NC_004113.1"/>
</dbReference>
<dbReference type="SMR" id="P0C8P1"/>
<dbReference type="STRING" id="197221.gene:10747553"/>
<dbReference type="EnsemblBacteria" id="BAC08513">
    <property type="protein sequence ID" value="BAC08513"/>
    <property type="gene ID" value="BAC08513"/>
</dbReference>
<dbReference type="KEGG" id="tel:tlr0961"/>
<dbReference type="PATRIC" id="fig|197221.4.peg.1008"/>
<dbReference type="eggNOG" id="COG0486">
    <property type="taxonomic scope" value="Bacteria"/>
</dbReference>
<dbReference type="Proteomes" id="UP000000440">
    <property type="component" value="Chromosome"/>
</dbReference>
<dbReference type="GO" id="GO:0005829">
    <property type="term" value="C:cytosol"/>
    <property type="evidence" value="ECO:0007669"/>
    <property type="project" value="TreeGrafter"/>
</dbReference>
<dbReference type="GO" id="GO:0005525">
    <property type="term" value="F:GTP binding"/>
    <property type="evidence" value="ECO:0007669"/>
    <property type="project" value="UniProtKB-UniRule"/>
</dbReference>
<dbReference type="GO" id="GO:0003924">
    <property type="term" value="F:GTPase activity"/>
    <property type="evidence" value="ECO:0007669"/>
    <property type="project" value="UniProtKB-UniRule"/>
</dbReference>
<dbReference type="GO" id="GO:0046872">
    <property type="term" value="F:metal ion binding"/>
    <property type="evidence" value="ECO:0007669"/>
    <property type="project" value="UniProtKB-KW"/>
</dbReference>
<dbReference type="GO" id="GO:0030488">
    <property type="term" value="P:tRNA methylation"/>
    <property type="evidence" value="ECO:0007669"/>
    <property type="project" value="TreeGrafter"/>
</dbReference>
<dbReference type="GO" id="GO:0002098">
    <property type="term" value="P:tRNA wobble uridine modification"/>
    <property type="evidence" value="ECO:0007669"/>
    <property type="project" value="TreeGrafter"/>
</dbReference>
<dbReference type="CDD" id="cd04164">
    <property type="entry name" value="trmE"/>
    <property type="match status" value="1"/>
</dbReference>
<dbReference type="CDD" id="cd14858">
    <property type="entry name" value="TrmE_N"/>
    <property type="match status" value="1"/>
</dbReference>
<dbReference type="FunFam" id="3.30.1360.120:FF:000003">
    <property type="entry name" value="tRNA modification GTPase MnmE"/>
    <property type="match status" value="1"/>
</dbReference>
<dbReference type="FunFam" id="3.40.50.300:FF:000494">
    <property type="entry name" value="tRNA modification GTPase MnmE"/>
    <property type="match status" value="1"/>
</dbReference>
<dbReference type="Gene3D" id="3.40.50.300">
    <property type="entry name" value="P-loop containing nucleotide triphosphate hydrolases"/>
    <property type="match status" value="1"/>
</dbReference>
<dbReference type="Gene3D" id="3.30.1360.120">
    <property type="entry name" value="Probable tRNA modification gtpase trme, domain 1"/>
    <property type="match status" value="1"/>
</dbReference>
<dbReference type="Gene3D" id="1.20.120.430">
    <property type="entry name" value="tRNA modification GTPase MnmE domain 2"/>
    <property type="match status" value="1"/>
</dbReference>
<dbReference type="HAMAP" id="MF_00379">
    <property type="entry name" value="GTPase_MnmE"/>
    <property type="match status" value="1"/>
</dbReference>
<dbReference type="InterPro" id="IPR031168">
    <property type="entry name" value="G_TrmE"/>
</dbReference>
<dbReference type="InterPro" id="IPR006073">
    <property type="entry name" value="GTP-bd"/>
</dbReference>
<dbReference type="InterPro" id="IPR018948">
    <property type="entry name" value="GTP-bd_TrmE_N"/>
</dbReference>
<dbReference type="InterPro" id="IPR004520">
    <property type="entry name" value="GTPase_MnmE"/>
</dbReference>
<dbReference type="InterPro" id="IPR027368">
    <property type="entry name" value="MnmE_dom2"/>
</dbReference>
<dbReference type="InterPro" id="IPR025867">
    <property type="entry name" value="MnmE_helical"/>
</dbReference>
<dbReference type="InterPro" id="IPR027417">
    <property type="entry name" value="P-loop_NTPase"/>
</dbReference>
<dbReference type="InterPro" id="IPR005225">
    <property type="entry name" value="Small_GTP-bd"/>
</dbReference>
<dbReference type="InterPro" id="IPR027266">
    <property type="entry name" value="TrmE/GcvT_dom1"/>
</dbReference>
<dbReference type="NCBIfam" id="TIGR00450">
    <property type="entry name" value="mnmE_trmE_thdF"/>
    <property type="match status" value="1"/>
</dbReference>
<dbReference type="NCBIfam" id="NF003661">
    <property type="entry name" value="PRK05291.1-3"/>
    <property type="match status" value="1"/>
</dbReference>
<dbReference type="NCBIfam" id="TIGR00231">
    <property type="entry name" value="small_GTP"/>
    <property type="match status" value="1"/>
</dbReference>
<dbReference type="PANTHER" id="PTHR42714">
    <property type="entry name" value="TRNA MODIFICATION GTPASE GTPBP3"/>
    <property type="match status" value="1"/>
</dbReference>
<dbReference type="PANTHER" id="PTHR42714:SF2">
    <property type="entry name" value="TRNA MODIFICATION GTPASE GTPBP3, MITOCHONDRIAL"/>
    <property type="match status" value="1"/>
</dbReference>
<dbReference type="Pfam" id="PF01926">
    <property type="entry name" value="MMR_HSR1"/>
    <property type="match status" value="1"/>
</dbReference>
<dbReference type="Pfam" id="PF12631">
    <property type="entry name" value="MnmE_helical"/>
    <property type="match status" value="1"/>
</dbReference>
<dbReference type="Pfam" id="PF10396">
    <property type="entry name" value="TrmE_N"/>
    <property type="match status" value="1"/>
</dbReference>
<dbReference type="SUPFAM" id="SSF52540">
    <property type="entry name" value="P-loop containing nucleoside triphosphate hydrolases"/>
    <property type="match status" value="1"/>
</dbReference>
<dbReference type="PROSITE" id="PS51709">
    <property type="entry name" value="G_TRME"/>
    <property type="match status" value="1"/>
</dbReference>
<gene>
    <name evidence="1" type="primary">mnmE</name>
    <name evidence="1" type="synonym">thdF</name>
    <name evidence="1" type="synonym">trmE</name>
    <name type="ordered locus">tlr0961</name>
</gene>
<comment type="function">
    <text evidence="1">Exhibits a very high intrinsic GTPase hydrolysis rate. Involved in the addition of a carboxymethylaminomethyl (cmnm) group at the wobble position (U34) of certain tRNAs, forming tRNA-cmnm(5)s(2)U34.</text>
</comment>
<comment type="cofactor">
    <cofactor evidence="1">
        <name>K(+)</name>
        <dbReference type="ChEBI" id="CHEBI:29103"/>
    </cofactor>
    <text evidence="1">Binds 1 potassium ion per subunit.</text>
</comment>
<comment type="subunit">
    <text evidence="1">Homodimer. Heterotetramer of two MnmE and two MnmG subunits.</text>
</comment>
<comment type="subcellular location">
    <subcellularLocation>
        <location evidence="1">Cytoplasm</location>
    </subcellularLocation>
</comment>
<comment type="similarity">
    <text evidence="1">Belongs to the TRAFAC class TrmE-Era-EngA-EngB-Septin-like GTPase superfamily. TrmE GTPase family.</text>
</comment>
<protein>
    <recommendedName>
        <fullName evidence="1">tRNA modification GTPase MnmE</fullName>
        <ecNumber evidence="1">3.6.-.-</ecNumber>
    </recommendedName>
</protein>
<feature type="chain" id="PRO_0000361774" description="tRNA modification GTPase MnmE">
    <location>
        <begin position="1"/>
        <end position="469"/>
    </location>
</feature>
<feature type="domain" description="TrmE-type G">
    <location>
        <begin position="222"/>
        <end position="390"/>
    </location>
</feature>
<feature type="binding site" evidence="1">
    <location>
        <position position="26"/>
    </location>
    <ligand>
        <name>(6S)-5-formyl-5,6,7,8-tetrahydrofolate</name>
        <dbReference type="ChEBI" id="CHEBI:57457"/>
    </ligand>
</feature>
<feature type="binding site" evidence="1">
    <location>
        <position position="88"/>
    </location>
    <ligand>
        <name>(6S)-5-formyl-5,6,7,8-tetrahydrofolate</name>
        <dbReference type="ChEBI" id="CHEBI:57457"/>
    </ligand>
</feature>
<feature type="binding site" evidence="1">
    <location>
        <position position="127"/>
    </location>
    <ligand>
        <name>(6S)-5-formyl-5,6,7,8-tetrahydrofolate</name>
        <dbReference type="ChEBI" id="CHEBI:57457"/>
    </ligand>
</feature>
<feature type="binding site" evidence="1">
    <location>
        <begin position="232"/>
        <end position="237"/>
    </location>
    <ligand>
        <name>GTP</name>
        <dbReference type="ChEBI" id="CHEBI:37565"/>
    </ligand>
</feature>
<feature type="binding site" evidence="1">
    <location>
        <position position="232"/>
    </location>
    <ligand>
        <name>K(+)</name>
        <dbReference type="ChEBI" id="CHEBI:29103"/>
    </ligand>
</feature>
<feature type="binding site" evidence="1">
    <location>
        <position position="236"/>
    </location>
    <ligand>
        <name>Mg(2+)</name>
        <dbReference type="ChEBI" id="CHEBI:18420"/>
    </ligand>
</feature>
<feature type="binding site" evidence="1">
    <location>
        <begin position="251"/>
        <end position="257"/>
    </location>
    <ligand>
        <name>GTP</name>
        <dbReference type="ChEBI" id="CHEBI:37565"/>
    </ligand>
</feature>
<feature type="binding site" evidence="1">
    <location>
        <position position="251"/>
    </location>
    <ligand>
        <name>K(+)</name>
        <dbReference type="ChEBI" id="CHEBI:29103"/>
    </ligand>
</feature>
<feature type="binding site" evidence="1">
    <location>
        <position position="253"/>
    </location>
    <ligand>
        <name>K(+)</name>
        <dbReference type="ChEBI" id="CHEBI:29103"/>
    </ligand>
</feature>
<feature type="binding site" evidence="1">
    <location>
        <position position="256"/>
    </location>
    <ligand>
        <name>K(+)</name>
        <dbReference type="ChEBI" id="CHEBI:29103"/>
    </ligand>
</feature>
<feature type="binding site" evidence="1">
    <location>
        <position position="257"/>
    </location>
    <ligand>
        <name>Mg(2+)</name>
        <dbReference type="ChEBI" id="CHEBI:18420"/>
    </ligand>
</feature>
<feature type="binding site" evidence="1">
    <location>
        <begin position="276"/>
        <end position="279"/>
    </location>
    <ligand>
        <name>GTP</name>
        <dbReference type="ChEBI" id="CHEBI:37565"/>
    </ligand>
</feature>
<feature type="binding site" evidence="1">
    <location>
        <begin position="344"/>
        <end position="347"/>
    </location>
    <ligand>
        <name>GTP</name>
        <dbReference type="ChEBI" id="CHEBI:37565"/>
    </ligand>
</feature>
<feature type="binding site" evidence="1">
    <location>
        <position position="469"/>
    </location>
    <ligand>
        <name>(6S)-5-formyl-5,6,7,8-tetrahydrofolate</name>
        <dbReference type="ChEBI" id="CHEBI:57457"/>
    </ligand>
</feature>
<reference key="1">
    <citation type="journal article" date="2002" name="DNA Res.">
        <title>Complete genome structure of the thermophilic cyanobacterium Thermosynechococcus elongatus BP-1.</title>
        <authorList>
            <person name="Nakamura Y."/>
            <person name="Kaneko T."/>
            <person name="Sato S."/>
            <person name="Ikeuchi M."/>
            <person name="Katoh H."/>
            <person name="Sasamoto S."/>
            <person name="Watanabe A."/>
            <person name="Iriguchi M."/>
            <person name="Kawashima K."/>
            <person name="Kimura T."/>
            <person name="Kishida Y."/>
            <person name="Kiyokawa C."/>
            <person name="Kohara M."/>
            <person name="Matsumoto M."/>
            <person name="Matsuno A."/>
            <person name="Nakazaki N."/>
            <person name="Shimpo S."/>
            <person name="Sugimoto M."/>
            <person name="Takeuchi C."/>
            <person name="Yamada M."/>
            <person name="Tabata S."/>
        </authorList>
    </citation>
    <scope>NUCLEOTIDE SEQUENCE [LARGE SCALE GENOMIC DNA]</scope>
    <source>
        <strain>NIES-2133 / IAM M-273 / BP-1</strain>
    </source>
</reference>
<name>MNME_THEVB</name>